<comment type="function">
    <text evidence="1">Binds 16S rRNA, required for the assembly of 30S particles and may also be responsible for determining the conformation of the 16S rRNA at the A site.</text>
</comment>
<comment type="subunit">
    <text evidence="1">Part of the 30S ribosomal subunit. Contacts proteins S3 and S10.</text>
</comment>
<comment type="similarity">
    <text evidence="1">Belongs to the universal ribosomal protein uS14 family.</text>
</comment>
<name>RS14_GLUOX</name>
<feature type="chain" id="PRO_1000128412" description="Small ribosomal subunit protein uS14">
    <location>
        <begin position="1"/>
        <end position="101"/>
    </location>
</feature>
<protein>
    <recommendedName>
        <fullName evidence="1">Small ribosomal subunit protein uS14</fullName>
    </recommendedName>
    <alternativeName>
        <fullName evidence="2">30S ribosomal protein S14</fullName>
    </alternativeName>
</protein>
<evidence type="ECO:0000255" key="1">
    <source>
        <dbReference type="HAMAP-Rule" id="MF_00537"/>
    </source>
</evidence>
<evidence type="ECO:0000305" key="2"/>
<organism>
    <name type="scientific">Gluconobacter oxydans (strain 621H)</name>
    <name type="common">Gluconobacter suboxydans</name>
    <dbReference type="NCBI Taxonomy" id="290633"/>
    <lineage>
        <taxon>Bacteria</taxon>
        <taxon>Pseudomonadati</taxon>
        <taxon>Pseudomonadota</taxon>
        <taxon>Alphaproteobacteria</taxon>
        <taxon>Acetobacterales</taxon>
        <taxon>Acetobacteraceae</taxon>
        <taxon>Gluconobacter</taxon>
    </lineage>
</organism>
<dbReference type="EMBL" id="CP000009">
    <property type="protein sequence ID" value="AAW60150.1"/>
    <property type="molecule type" value="Genomic_DNA"/>
</dbReference>
<dbReference type="RefSeq" id="WP_011251953.1">
    <property type="nucleotide sequence ID" value="NZ_LT900338.1"/>
</dbReference>
<dbReference type="SMR" id="Q5FTZ6"/>
<dbReference type="STRING" id="290633.GOX0367"/>
<dbReference type="GeneID" id="76195069"/>
<dbReference type="KEGG" id="gox:GOX0367"/>
<dbReference type="eggNOG" id="COG0199">
    <property type="taxonomic scope" value="Bacteria"/>
</dbReference>
<dbReference type="HOGENOM" id="CLU_139869_0_1_5"/>
<dbReference type="Proteomes" id="UP000006375">
    <property type="component" value="Chromosome"/>
</dbReference>
<dbReference type="GO" id="GO:0005737">
    <property type="term" value="C:cytoplasm"/>
    <property type="evidence" value="ECO:0007669"/>
    <property type="project" value="UniProtKB-ARBA"/>
</dbReference>
<dbReference type="GO" id="GO:0015935">
    <property type="term" value="C:small ribosomal subunit"/>
    <property type="evidence" value="ECO:0007669"/>
    <property type="project" value="TreeGrafter"/>
</dbReference>
<dbReference type="GO" id="GO:0019843">
    <property type="term" value="F:rRNA binding"/>
    <property type="evidence" value="ECO:0007669"/>
    <property type="project" value="UniProtKB-UniRule"/>
</dbReference>
<dbReference type="GO" id="GO:0003735">
    <property type="term" value="F:structural constituent of ribosome"/>
    <property type="evidence" value="ECO:0007669"/>
    <property type="project" value="InterPro"/>
</dbReference>
<dbReference type="GO" id="GO:0006412">
    <property type="term" value="P:translation"/>
    <property type="evidence" value="ECO:0007669"/>
    <property type="project" value="UniProtKB-UniRule"/>
</dbReference>
<dbReference type="FunFam" id="1.10.287.1480:FF:000001">
    <property type="entry name" value="30S ribosomal protein S14"/>
    <property type="match status" value="1"/>
</dbReference>
<dbReference type="Gene3D" id="1.10.287.1480">
    <property type="match status" value="1"/>
</dbReference>
<dbReference type="HAMAP" id="MF_00537">
    <property type="entry name" value="Ribosomal_uS14_1"/>
    <property type="match status" value="1"/>
</dbReference>
<dbReference type="InterPro" id="IPR001209">
    <property type="entry name" value="Ribosomal_uS14"/>
</dbReference>
<dbReference type="InterPro" id="IPR023036">
    <property type="entry name" value="Ribosomal_uS14_bac/plastid"/>
</dbReference>
<dbReference type="InterPro" id="IPR018271">
    <property type="entry name" value="Ribosomal_uS14_CS"/>
</dbReference>
<dbReference type="NCBIfam" id="NF006477">
    <property type="entry name" value="PRK08881.1"/>
    <property type="match status" value="1"/>
</dbReference>
<dbReference type="PANTHER" id="PTHR19836">
    <property type="entry name" value="30S RIBOSOMAL PROTEIN S14"/>
    <property type="match status" value="1"/>
</dbReference>
<dbReference type="PANTHER" id="PTHR19836:SF19">
    <property type="entry name" value="SMALL RIBOSOMAL SUBUNIT PROTEIN US14M"/>
    <property type="match status" value="1"/>
</dbReference>
<dbReference type="Pfam" id="PF00253">
    <property type="entry name" value="Ribosomal_S14"/>
    <property type="match status" value="1"/>
</dbReference>
<dbReference type="SUPFAM" id="SSF57716">
    <property type="entry name" value="Glucocorticoid receptor-like (DNA-binding domain)"/>
    <property type="match status" value="1"/>
</dbReference>
<dbReference type="PROSITE" id="PS00527">
    <property type="entry name" value="RIBOSOMAL_S14"/>
    <property type="match status" value="1"/>
</dbReference>
<accession>Q5FTZ6</accession>
<proteinExistence type="inferred from homology"/>
<reference key="1">
    <citation type="journal article" date="2005" name="Nat. Biotechnol.">
        <title>Complete genome sequence of the acetic acid bacterium Gluconobacter oxydans.</title>
        <authorList>
            <person name="Prust C."/>
            <person name="Hoffmeister M."/>
            <person name="Liesegang H."/>
            <person name="Wiezer A."/>
            <person name="Fricke W.F."/>
            <person name="Ehrenreich A."/>
            <person name="Gottschalk G."/>
            <person name="Deppenmeier U."/>
        </authorList>
    </citation>
    <scope>NUCLEOTIDE SEQUENCE [LARGE SCALE GENOMIC DNA]</scope>
    <source>
        <strain>621H</strain>
    </source>
</reference>
<sequence length="101" mass="11476">MAKVSAVNRNNHRAALVKRDKEKRTALKNIIKDRTLSVEDRFDATLKLAQMPRNGSATRVRLRCKLSGRPRANYRKFELSRIALRDLASAGQIPGMVKSSW</sequence>
<keyword id="KW-1185">Reference proteome</keyword>
<keyword id="KW-0687">Ribonucleoprotein</keyword>
<keyword id="KW-0689">Ribosomal protein</keyword>
<keyword id="KW-0694">RNA-binding</keyword>
<keyword id="KW-0699">rRNA-binding</keyword>
<gene>
    <name evidence="1" type="primary">rpsN</name>
    <name type="ordered locus">GOX0367</name>
</gene>